<accession>F1SYH4</accession>
<feature type="signal peptide" evidence="2">
    <location>
        <begin position="1"/>
        <end position="14"/>
    </location>
</feature>
<feature type="chain" id="PRO_0000451369" description="Cytochrome P450 monooxygenase 212">
    <location>
        <begin position="15"/>
        <end position="545"/>
    </location>
</feature>
<feature type="binding site" description="axial binding residue" evidence="1">
    <location>
        <position position="486"/>
    </location>
    <ligand>
        <name>heme</name>
        <dbReference type="ChEBI" id="CHEBI:30413"/>
    </ligand>
    <ligandPart>
        <name>Fe</name>
        <dbReference type="ChEBI" id="CHEBI:18248"/>
    </ligandPart>
</feature>
<organism>
    <name type="scientific">Postia placenta (strain ATCC 44394 / Madison 698-R)</name>
    <name type="common">Brown rot fungus</name>
    <name type="synonym">Poria monticola</name>
    <dbReference type="NCBI Taxonomy" id="561896"/>
    <lineage>
        <taxon>Eukaryota</taxon>
        <taxon>Fungi</taxon>
        <taxon>Dikarya</taxon>
        <taxon>Basidiomycota</taxon>
        <taxon>Agaricomycotina</taxon>
        <taxon>Agaricomycetes</taxon>
        <taxon>Polyporales</taxon>
        <taxon>Adustoporiaceae</taxon>
        <taxon>Rhodonia</taxon>
    </lineage>
</organism>
<protein>
    <recommendedName>
        <fullName evidence="4">Cytochrome P450 monooxygenase 212</fullName>
        <ecNumber evidence="6">1.-.-.-</ecNumber>
    </recommendedName>
</protein>
<dbReference type="EC" id="1.-.-.-" evidence="6"/>
<dbReference type="EMBL" id="AB573385">
    <property type="protein sequence ID" value="BAK09518.1"/>
    <property type="molecule type" value="mRNA"/>
</dbReference>
<dbReference type="SMR" id="F1SYH4"/>
<dbReference type="GO" id="GO:0020037">
    <property type="term" value="F:heme binding"/>
    <property type="evidence" value="ECO:0007669"/>
    <property type="project" value="InterPro"/>
</dbReference>
<dbReference type="GO" id="GO:0005506">
    <property type="term" value="F:iron ion binding"/>
    <property type="evidence" value="ECO:0007669"/>
    <property type="project" value="InterPro"/>
</dbReference>
<dbReference type="GO" id="GO:0004497">
    <property type="term" value="F:monooxygenase activity"/>
    <property type="evidence" value="ECO:0007669"/>
    <property type="project" value="UniProtKB-KW"/>
</dbReference>
<dbReference type="GO" id="GO:0016705">
    <property type="term" value="F:oxidoreductase activity, acting on paired donors, with incorporation or reduction of molecular oxygen"/>
    <property type="evidence" value="ECO:0007669"/>
    <property type="project" value="InterPro"/>
</dbReference>
<dbReference type="CDD" id="cd11069">
    <property type="entry name" value="CYP_FUM15-like"/>
    <property type="match status" value="1"/>
</dbReference>
<dbReference type="Gene3D" id="1.10.630.10">
    <property type="entry name" value="Cytochrome P450"/>
    <property type="match status" value="1"/>
</dbReference>
<dbReference type="InterPro" id="IPR001128">
    <property type="entry name" value="Cyt_P450"/>
</dbReference>
<dbReference type="InterPro" id="IPR002401">
    <property type="entry name" value="Cyt_P450_E_grp-I"/>
</dbReference>
<dbReference type="InterPro" id="IPR036396">
    <property type="entry name" value="Cyt_P450_sf"/>
</dbReference>
<dbReference type="InterPro" id="IPR050121">
    <property type="entry name" value="Cytochrome_P450_monoxygenase"/>
</dbReference>
<dbReference type="PANTHER" id="PTHR24305">
    <property type="entry name" value="CYTOCHROME P450"/>
    <property type="match status" value="1"/>
</dbReference>
<dbReference type="PANTHER" id="PTHR24305:SF166">
    <property type="entry name" value="CYTOCHROME P450 12A4, MITOCHONDRIAL-RELATED"/>
    <property type="match status" value="1"/>
</dbReference>
<dbReference type="Pfam" id="PF00067">
    <property type="entry name" value="p450"/>
    <property type="match status" value="1"/>
</dbReference>
<dbReference type="PRINTS" id="PR00463">
    <property type="entry name" value="EP450I"/>
</dbReference>
<dbReference type="PRINTS" id="PR00385">
    <property type="entry name" value="P450"/>
</dbReference>
<dbReference type="SUPFAM" id="SSF48264">
    <property type="entry name" value="Cytochrome P450"/>
    <property type="match status" value="1"/>
</dbReference>
<reference key="1">
    <citation type="journal article" date="2012" name="Arch. Microbiol.">
        <title>Molecular identification and functional characterization of cytochrome P450 monooxygenases from the brown-rot basidiomycete Postia placenta.</title>
        <authorList>
            <person name="Ide M."/>
            <person name="Ichinose H."/>
            <person name="Wariishi H."/>
        </authorList>
    </citation>
    <scope>NUCLEOTIDE SEQUENCE [MRNA]</scope>
    <scope>IDENTIFICATION</scope>
    <scope>FUNCTION</scope>
    <scope>CATALYTIC ACTIVITY</scope>
    <source>
        <strain>ATCC 44394 / Madison 698-R</strain>
    </source>
</reference>
<sequence>MAAYAWLYCALALGATWYLQRYLRQRDAYSVLRNIPGPPSYSWAKGHINQYFNPRGQAFHEEVALNYGSVVKLDGMFGSKLFYVADPKALHTILIKEENTWEEPDAFLALNQLMFGDCLVGTLGEHHRRQRKMLNPVFSVNHMRHMLPIFYNVILKLREVILAKVKAGESEIDVLEWSGRAALELIGQGGLGYSFDPLLVNSESRNEYGDALKSCFPALSKVDILRRYAHYLIKMGPRWFRRSVVDMYPNPDVQNIKEVVDTMSAKSYEIFNQKKVALKRGDEAVLRQVGEGKDIMSILIKANTAASEDERLPESELIAQMSLLVFAATDTTSNTLARILQLLAEHQEIQVKLRDEILQSSAGGNDISYEELNRLRLLDAVCRETLRLFPPVTTLRRVPRKDSVLPLSEPIYGVDGRVINEIPVAKGTDVIIGTYGVNVRKQLWGEDSLEWKPERWLSPLPSAVTAAAIPGVYSNIMTFLGGKRACIGFKFSEMEMKVVLAVMLSTFTFERTEKVIQWNIAGVSYPTVEGNSQPQLPLKMGLYRP</sequence>
<proteinExistence type="evidence at protein level"/>
<keyword id="KW-0349">Heme</keyword>
<keyword id="KW-0408">Iron</keyword>
<keyword id="KW-0479">Metal-binding</keyword>
<keyword id="KW-0503">Monooxygenase</keyword>
<keyword id="KW-0560">Oxidoreductase</keyword>
<keyword id="KW-0732">Signal</keyword>
<name>CY212_POSPM</name>
<evidence type="ECO:0000250" key="1">
    <source>
        <dbReference type="UniProtKB" id="P04798"/>
    </source>
</evidence>
<evidence type="ECO:0000255" key="2"/>
<evidence type="ECO:0000269" key="3">
    <source>
    </source>
</evidence>
<evidence type="ECO:0000303" key="4">
    <source>
    </source>
</evidence>
<evidence type="ECO:0000305" key="5"/>
<evidence type="ECO:0000305" key="6">
    <source>
    </source>
</evidence>
<comment type="function">
    <text evidence="3">Cytochrome P450 monooxygenase that is able to use anthracene and pyrene as substrates for oxidation.</text>
</comment>
<comment type="cofactor">
    <cofactor evidence="1">
        <name>heme</name>
        <dbReference type="ChEBI" id="CHEBI:30413"/>
    </cofactor>
</comment>
<comment type="pathway">
    <text evidence="5">Secondary metabolite biosynthesis.</text>
</comment>
<comment type="similarity">
    <text evidence="5">Belongs to the cytochrome P450 family.</text>
</comment>
<gene>
    <name evidence="4" type="primary">CYP212</name>
    <name evidence="4" type="synonym">CYP5150D7</name>
</gene>